<keyword id="KW-1185">Reference proteome</keyword>
<evidence type="ECO:0000255" key="1">
    <source>
        <dbReference type="HAMAP-Rule" id="MF_02110"/>
    </source>
</evidence>
<dbReference type="EMBL" id="AP009178">
    <property type="protein sequence ID" value="BAF69477.1"/>
    <property type="molecule type" value="Genomic_DNA"/>
</dbReference>
<dbReference type="RefSeq" id="WP_012081740.1">
    <property type="nucleotide sequence ID" value="NC_009662.1"/>
</dbReference>
<dbReference type="STRING" id="387092.NIS_0363"/>
<dbReference type="KEGG" id="nis:NIS_0363"/>
<dbReference type="eggNOG" id="ENOG5030YCA">
    <property type="taxonomic scope" value="Bacteria"/>
</dbReference>
<dbReference type="HOGENOM" id="CLU_120359_1_0_7"/>
<dbReference type="InParanoid" id="A6Q1W8"/>
<dbReference type="OrthoDB" id="5324700at2"/>
<dbReference type="Proteomes" id="UP000001118">
    <property type="component" value="Chromosome"/>
</dbReference>
<dbReference type="HAMAP" id="MF_02110">
    <property type="entry name" value="UPF0763"/>
    <property type="match status" value="1"/>
</dbReference>
<dbReference type="InterPro" id="IPR019724">
    <property type="entry name" value="UPF0763"/>
</dbReference>
<dbReference type="Pfam" id="PF10788">
    <property type="entry name" value="DUF2603"/>
    <property type="match status" value="1"/>
</dbReference>
<accession>A6Q1W8</accession>
<comment type="similarity">
    <text evidence="1">Belongs to the UPF0763 family.</text>
</comment>
<feature type="chain" id="PRO_0000394794" description="UPF0763 protein NIS_0363">
    <location>
        <begin position="1"/>
        <end position="165"/>
    </location>
</feature>
<sequence length="165" mass="19105">MNIEKSNGKSLMTKINNLAKELGIENPQGVTIVRLEDTEDPNKKTLELVQGSWESKAPWFVIDKEEKVHVLSTLESILHLIRSLNEAKYENFNLKLEKAILENLPIDFNDVWVVAMSEIQKRLTESKNKNLLDIDIKKLVKDIKKHHPNLFMQLKDLQFPPQGHQ</sequence>
<protein>
    <recommendedName>
        <fullName evidence="1">UPF0763 protein NIS_0363</fullName>
    </recommendedName>
</protein>
<organism>
    <name type="scientific">Nitratiruptor sp. (strain SB155-2)</name>
    <dbReference type="NCBI Taxonomy" id="387092"/>
    <lineage>
        <taxon>Bacteria</taxon>
        <taxon>Pseudomonadati</taxon>
        <taxon>Campylobacterota</taxon>
        <taxon>Epsilonproteobacteria</taxon>
        <taxon>Nautiliales</taxon>
        <taxon>Nitratiruptoraceae</taxon>
        <taxon>Nitratiruptor</taxon>
    </lineage>
</organism>
<reference key="1">
    <citation type="journal article" date="2007" name="Proc. Natl. Acad. Sci. U.S.A.">
        <title>Deep-sea vent epsilon-proteobacterial genomes provide insights into emergence of pathogens.</title>
        <authorList>
            <person name="Nakagawa S."/>
            <person name="Takaki Y."/>
            <person name="Shimamura S."/>
            <person name="Reysenbach A.-L."/>
            <person name="Takai K."/>
            <person name="Horikoshi K."/>
        </authorList>
    </citation>
    <scope>NUCLEOTIDE SEQUENCE [LARGE SCALE GENOMIC DNA]</scope>
    <source>
        <strain>SB155-2</strain>
    </source>
</reference>
<name>Y363_NITSB</name>
<proteinExistence type="inferred from homology"/>
<gene>
    <name type="ordered locus">NIS_0363</name>
</gene>